<gene>
    <name evidence="1" type="primary">alaS</name>
    <name type="ordered locus">TT_C1480</name>
</gene>
<reference key="1">
    <citation type="journal article" date="2004" name="Nat. Biotechnol.">
        <title>The genome sequence of the extreme thermophile Thermus thermophilus.</title>
        <authorList>
            <person name="Henne A."/>
            <person name="Brueggemann H."/>
            <person name="Raasch C."/>
            <person name="Wiezer A."/>
            <person name="Hartsch T."/>
            <person name="Liesegang H."/>
            <person name="Johann A."/>
            <person name="Lienard T."/>
            <person name="Gohl O."/>
            <person name="Martinez-Arias R."/>
            <person name="Jacobi C."/>
            <person name="Starkuviene V."/>
            <person name="Schlenczeck S."/>
            <person name="Dencker S."/>
            <person name="Huber R."/>
            <person name="Klenk H.-P."/>
            <person name="Kramer W."/>
            <person name="Merkl R."/>
            <person name="Gottschalk G."/>
            <person name="Fritz H.-J."/>
        </authorList>
    </citation>
    <scope>NUCLEOTIDE SEQUENCE [LARGE SCALE GENOMIC DNA]</scope>
    <source>
        <strain>ATCC BAA-163 / DSM 7039 / HB27</strain>
    </source>
</reference>
<proteinExistence type="inferred from homology"/>
<keyword id="KW-0030">Aminoacyl-tRNA synthetase</keyword>
<keyword id="KW-0067">ATP-binding</keyword>
<keyword id="KW-0963">Cytoplasm</keyword>
<keyword id="KW-0436">Ligase</keyword>
<keyword id="KW-0479">Metal-binding</keyword>
<keyword id="KW-0547">Nucleotide-binding</keyword>
<keyword id="KW-0648">Protein biosynthesis</keyword>
<keyword id="KW-0694">RNA-binding</keyword>
<keyword id="KW-0820">tRNA-binding</keyword>
<keyword id="KW-0862">Zinc</keyword>
<sequence>MRTAEIREKFLSFFEGKGHLRLPSFSLIPEDDPSLLFTSAGMAPLKPYFLGAKPIFGGREWRRVTTCQECLRVGDIENVGRTSRHNTYFEMLGNFSFGDYFKKEAILWAWEFLTEHLRLDPGRLWVTVFEDDDEAYEIWRDLVGVPEERIGRFGEDENYWPGGAITHGPNGPSGPCSEIFYDRGPAYGTPDETGPNTGSGDRFVEIWNLVFTQYDRQGPIPGPGILKPLPQKNIDTGMGLYRVAAILQDVEDFYRTDTFFPIIQEVARMSGRPYEGKTSVSHRVIADHVRAVVAALSDGATFSNTGRGYVIRRLLRRALRHGYLLGLSDPFLHRLAPLVAELLGDFYPEMRENLPAVEKQIRLEEERFLETLEGGLKRLDALLSGLKPGEVLPGKEAFRLYDTYGFPLDLTVEIAAERGYGVDTEGFQKAMEEQQSRSRAAMAFEREIFKKGAQVLEELYAERGATEFLGYNALEAEAEVLALLAGDQSLLEAGPGTEVQVVLDKTPFYAEGGGQIGDFGLLEWPGGRARVETTRKTERGIFLHKARVEEGVLRVGERVRAVVDPRRRDTERNHTATHLLHAALRAVLGPHVRQAGSLVAPDRLRFDFTHPEPLKPEELERVELLVNRWIMADFPVTWRYMPLEEARKEGAMALFGEKYGEVVRVVRVEGSPLEGLESKELCGGCHVRRTGEIGAFLIRSEEAVSAGVRRIEAVTGEEAIRFARGSLNRLKALAERLEVGEAALEERLEKLLAELKEKEREVESLKARLVQAALGGGGGASLEEKGGLRWTVAELPGLDAKALRQAADDLVARGADVALVLSGGQAVLKLSPKAQGMGLEAGALFRALAEKAGGRGGGKGALAQGGGLDPRKAREALPGLLP</sequence>
<protein>
    <recommendedName>
        <fullName evidence="1">Alanine--tRNA ligase</fullName>
        <ecNumber evidence="1">6.1.1.7</ecNumber>
    </recommendedName>
    <alternativeName>
        <fullName evidence="1">Alanyl-tRNA synthetase</fullName>
        <shortName evidence="1">AlaRS</shortName>
    </alternativeName>
</protein>
<evidence type="ECO:0000255" key="1">
    <source>
        <dbReference type="HAMAP-Rule" id="MF_00036"/>
    </source>
</evidence>
<evidence type="ECO:0000256" key="2">
    <source>
        <dbReference type="SAM" id="MobiDB-lite"/>
    </source>
</evidence>
<comment type="function">
    <text evidence="1">Catalyzes the attachment of alanine to tRNA(Ala) in a two-step reaction: alanine is first activated by ATP to form Ala-AMP and then transferred to the acceptor end of tRNA(Ala). Also edits incorrectly charged Ser-tRNA(Ala) and Gly-tRNA(Ala) via its editing domain.</text>
</comment>
<comment type="catalytic activity">
    <reaction evidence="1">
        <text>tRNA(Ala) + L-alanine + ATP = L-alanyl-tRNA(Ala) + AMP + diphosphate</text>
        <dbReference type="Rhea" id="RHEA:12540"/>
        <dbReference type="Rhea" id="RHEA-COMP:9657"/>
        <dbReference type="Rhea" id="RHEA-COMP:9923"/>
        <dbReference type="ChEBI" id="CHEBI:30616"/>
        <dbReference type="ChEBI" id="CHEBI:33019"/>
        <dbReference type="ChEBI" id="CHEBI:57972"/>
        <dbReference type="ChEBI" id="CHEBI:78442"/>
        <dbReference type="ChEBI" id="CHEBI:78497"/>
        <dbReference type="ChEBI" id="CHEBI:456215"/>
        <dbReference type="EC" id="6.1.1.7"/>
    </reaction>
</comment>
<comment type="cofactor">
    <cofactor evidence="1">
        <name>Zn(2+)</name>
        <dbReference type="ChEBI" id="CHEBI:29105"/>
    </cofactor>
    <text evidence="1">Binds 1 zinc ion per subunit.</text>
</comment>
<comment type="subcellular location">
    <subcellularLocation>
        <location evidence="1">Cytoplasm</location>
    </subcellularLocation>
</comment>
<comment type="domain">
    <text evidence="1">Consists of three domains; the N-terminal catalytic domain, the editing domain and the C-terminal C-Ala domain. The editing domain removes incorrectly charged amino acids, while the C-Ala domain, along with tRNA(Ala), serves as a bridge to cooperatively bring together the editing and aminoacylation centers thus stimulating deacylation of misacylated tRNAs.</text>
</comment>
<comment type="similarity">
    <text evidence="1">Belongs to the class-II aminoacyl-tRNA synthetase family.</text>
</comment>
<organism>
    <name type="scientific">Thermus thermophilus (strain ATCC BAA-163 / DSM 7039 / HB27)</name>
    <dbReference type="NCBI Taxonomy" id="262724"/>
    <lineage>
        <taxon>Bacteria</taxon>
        <taxon>Thermotogati</taxon>
        <taxon>Deinococcota</taxon>
        <taxon>Deinococci</taxon>
        <taxon>Thermales</taxon>
        <taxon>Thermaceae</taxon>
        <taxon>Thermus</taxon>
    </lineage>
</organism>
<name>SYA_THET2</name>
<accession>P61707</accession>
<feature type="chain" id="PRO_0000075233" description="Alanine--tRNA ligase">
    <location>
        <begin position="1"/>
        <end position="882"/>
    </location>
</feature>
<feature type="region of interest" description="Disordered" evidence="2">
    <location>
        <begin position="853"/>
        <end position="882"/>
    </location>
</feature>
<feature type="compositionally biased region" description="Gly residues" evidence="2">
    <location>
        <begin position="854"/>
        <end position="868"/>
    </location>
</feature>
<feature type="binding site" evidence="1">
    <location>
        <position position="574"/>
    </location>
    <ligand>
        <name>Zn(2+)</name>
        <dbReference type="ChEBI" id="CHEBI:29105"/>
    </ligand>
</feature>
<feature type="binding site" evidence="1">
    <location>
        <position position="578"/>
    </location>
    <ligand>
        <name>Zn(2+)</name>
        <dbReference type="ChEBI" id="CHEBI:29105"/>
    </ligand>
</feature>
<feature type="binding site" evidence="1">
    <location>
        <position position="682"/>
    </location>
    <ligand>
        <name>Zn(2+)</name>
        <dbReference type="ChEBI" id="CHEBI:29105"/>
    </ligand>
</feature>
<feature type="binding site" evidence="1">
    <location>
        <position position="686"/>
    </location>
    <ligand>
        <name>Zn(2+)</name>
        <dbReference type="ChEBI" id="CHEBI:29105"/>
    </ligand>
</feature>
<dbReference type="EC" id="6.1.1.7" evidence="1"/>
<dbReference type="EMBL" id="AE017221">
    <property type="protein sequence ID" value="AAS81822.1"/>
    <property type="molecule type" value="Genomic_DNA"/>
</dbReference>
<dbReference type="RefSeq" id="WP_011173855.1">
    <property type="nucleotide sequence ID" value="NC_005835.1"/>
</dbReference>
<dbReference type="SMR" id="P61707"/>
<dbReference type="KEGG" id="tth:TT_C1480"/>
<dbReference type="eggNOG" id="COG0013">
    <property type="taxonomic scope" value="Bacteria"/>
</dbReference>
<dbReference type="HOGENOM" id="CLU_004485_1_1_0"/>
<dbReference type="OrthoDB" id="9803884at2"/>
<dbReference type="Proteomes" id="UP000000592">
    <property type="component" value="Chromosome"/>
</dbReference>
<dbReference type="GO" id="GO:0005829">
    <property type="term" value="C:cytosol"/>
    <property type="evidence" value="ECO:0007669"/>
    <property type="project" value="TreeGrafter"/>
</dbReference>
<dbReference type="GO" id="GO:0004813">
    <property type="term" value="F:alanine-tRNA ligase activity"/>
    <property type="evidence" value="ECO:0007669"/>
    <property type="project" value="UniProtKB-UniRule"/>
</dbReference>
<dbReference type="GO" id="GO:0002161">
    <property type="term" value="F:aminoacyl-tRNA deacylase activity"/>
    <property type="evidence" value="ECO:0007669"/>
    <property type="project" value="TreeGrafter"/>
</dbReference>
<dbReference type="GO" id="GO:0005524">
    <property type="term" value="F:ATP binding"/>
    <property type="evidence" value="ECO:0007669"/>
    <property type="project" value="UniProtKB-UniRule"/>
</dbReference>
<dbReference type="GO" id="GO:0000049">
    <property type="term" value="F:tRNA binding"/>
    <property type="evidence" value="ECO:0007669"/>
    <property type="project" value="UniProtKB-KW"/>
</dbReference>
<dbReference type="GO" id="GO:0008270">
    <property type="term" value="F:zinc ion binding"/>
    <property type="evidence" value="ECO:0007669"/>
    <property type="project" value="UniProtKB-UniRule"/>
</dbReference>
<dbReference type="GO" id="GO:0006419">
    <property type="term" value="P:alanyl-tRNA aminoacylation"/>
    <property type="evidence" value="ECO:0007669"/>
    <property type="project" value="UniProtKB-UniRule"/>
</dbReference>
<dbReference type="CDD" id="cd00673">
    <property type="entry name" value="AlaRS_core"/>
    <property type="match status" value="1"/>
</dbReference>
<dbReference type="FunFam" id="2.40.30.130:FF:000001">
    <property type="entry name" value="Alanine--tRNA ligase"/>
    <property type="match status" value="1"/>
</dbReference>
<dbReference type="FunFam" id="3.10.310.40:FF:000001">
    <property type="entry name" value="Alanine--tRNA ligase"/>
    <property type="match status" value="1"/>
</dbReference>
<dbReference type="FunFam" id="3.30.54.20:FF:000001">
    <property type="entry name" value="Alanine--tRNA ligase"/>
    <property type="match status" value="1"/>
</dbReference>
<dbReference type="FunFam" id="3.30.930.10:FF:000004">
    <property type="entry name" value="Alanine--tRNA ligase"/>
    <property type="match status" value="1"/>
</dbReference>
<dbReference type="FunFam" id="3.30.980.10:FF:000004">
    <property type="entry name" value="Alanine--tRNA ligase, cytoplasmic"/>
    <property type="match status" value="1"/>
</dbReference>
<dbReference type="Gene3D" id="2.40.30.130">
    <property type="match status" value="1"/>
</dbReference>
<dbReference type="Gene3D" id="3.10.310.40">
    <property type="match status" value="1"/>
</dbReference>
<dbReference type="Gene3D" id="3.30.54.20">
    <property type="match status" value="1"/>
</dbReference>
<dbReference type="Gene3D" id="6.10.250.550">
    <property type="match status" value="1"/>
</dbReference>
<dbReference type="Gene3D" id="3.30.930.10">
    <property type="entry name" value="Bira Bifunctional Protein, Domain 2"/>
    <property type="match status" value="1"/>
</dbReference>
<dbReference type="Gene3D" id="3.30.980.10">
    <property type="entry name" value="Threonyl-trna Synthetase, Chain A, domain 2"/>
    <property type="match status" value="1"/>
</dbReference>
<dbReference type="HAMAP" id="MF_00036_B">
    <property type="entry name" value="Ala_tRNA_synth_B"/>
    <property type="match status" value="1"/>
</dbReference>
<dbReference type="InterPro" id="IPR045864">
    <property type="entry name" value="aa-tRNA-synth_II/BPL/LPL"/>
</dbReference>
<dbReference type="InterPro" id="IPR002318">
    <property type="entry name" value="Ala-tRNA-lgiase_IIc"/>
</dbReference>
<dbReference type="InterPro" id="IPR018162">
    <property type="entry name" value="Ala-tRNA-ligase_IIc_anticod-bd"/>
</dbReference>
<dbReference type="InterPro" id="IPR018165">
    <property type="entry name" value="Ala-tRNA-synth_IIc_core"/>
</dbReference>
<dbReference type="InterPro" id="IPR018164">
    <property type="entry name" value="Ala-tRNA-synth_IIc_N"/>
</dbReference>
<dbReference type="InterPro" id="IPR050058">
    <property type="entry name" value="Ala-tRNA_ligase"/>
</dbReference>
<dbReference type="InterPro" id="IPR023033">
    <property type="entry name" value="Ala_tRNA_ligase_euk/bac"/>
</dbReference>
<dbReference type="InterPro" id="IPR003156">
    <property type="entry name" value="DHHA1_dom"/>
</dbReference>
<dbReference type="InterPro" id="IPR018163">
    <property type="entry name" value="Thr/Ala-tRNA-synth_IIc_edit"/>
</dbReference>
<dbReference type="InterPro" id="IPR009000">
    <property type="entry name" value="Transl_B-barrel_sf"/>
</dbReference>
<dbReference type="InterPro" id="IPR012947">
    <property type="entry name" value="tRNA_SAD"/>
</dbReference>
<dbReference type="NCBIfam" id="TIGR00344">
    <property type="entry name" value="alaS"/>
    <property type="match status" value="1"/>
</dbReference>
<dbReference type="PANTHER" id="PTHR11777:SF9">
    <property type="entry name" value="ALANINE--TRNA LIGASE, CYTOPLASMIC"/>
    <property type="match status" value="1"/>
</dbReference>
<dbReference type="PANTHER" id="PTHR11777">
    <property type="entry name" value="ALANYL-TRNA SYNTHETASE"/>
    <property type="match status" value="1"/>
</dbReference>
<dbReference type="Pfam" id="PF02272">
    <property type="entry name" value="DHHA1"/>
    <property type="match status" value="1"/>
</dbReference>
<dbReference type="Pfam" id="PF01411">
    <property type="entry name" value="tRNA-synt_2c"/>
    <property type="match status" value="1"/>
</dbReference>
<dbReference type="Pfam" id="PF07973">
    <property type="entry name" value="tRNA_SAD"/>
    <property type="match status" value="1"/>
</dbReference>
<dbReference type="PRINTS" id="PR00980">
    <property type="entry name" value="TRNASYNTHALA"/>
</dbReference>
<dbReference type="SMART" id="SM00863">
    <property type="entry name" value="tRNA_SAD"/>
    <property type="match status" value="1"/>
</dbReference>
<dbReference type="SUPFAM" id="SSF55681">
    <property type="entry name" value="Class II aaRS and biotin synthetases"/>
    <property type="match status" value="1"/>
</dbReference>
<dbReference type="SUPFAM" id="SSF101353">
    <property type="entry name" value="Putative anticodon-binding domain of alanyl-tRNA synthetase (AlaRS)"/>
    <property type="match status" value="1"/>
</dbReference>
<dbReference type="SUPFAM" id="SSF55186">
    <property type="entry name" value="ThrRS/AlaRS common domain"/>
    <property type="match status" value="1"/>
</dbReference>
<dbReference type="SUPFAM" id="SSF50447">
    <property type="entry name" value="Translation proteins"/>
    <property type="match status" value="1"/>
</dbReference>
<dbReference type="PROSITE" id="PS50860">
    <property type="entry name" value="AA_TRNA_LIGASE_II_ALA"/>
    <property type="match status" value="1"/>
</dbReference>